<protein>
    <recommendedName>
        <fullName evidence="1">RNA chaperone ProQ</fullName>
    </recommendedName>
</protein>
<name>PROQ_SALSV</name>
<keyword id="KW-0143">Chaperone</keyword>
<keyword id="KW-0963">Cytoplasm</keyword>
<keyword id="KW-0694">RNA-binding</keyword>
<gene>
    <name evidence="1" type="primary">proQ</name>
    <name type="ordered locus">SeSA_A1989</name>
</gene>
<accession>B4TY14</accession>
<reference key="1">
    <citation type="journal article" date="2011" name="J. Bacteriol.">
        <title>Comparative genomics of 28 Salmonella enterica isolates: evidence for CRISPR-mediated adaptive sublineage evolution.</title>
        <authorList>
            <person name="Fricke W.F."/>
            <person name="Mammel M.K."/>
            <person name="McDermott P.F."/>
            <person name="Tartera C."/>
            <person name="White D.G."/>
            <person name="Leclerc J.E."/>
            <person name="Ravel J."/>
            <person name="Cebula T.A."/>
        </authorList>
    </citation>
    <scope>NUCLEOTIDE SEQUENCE [LARGE SCALE GENOMIC DNA]</scope>
    <source>
        <strain>CVM19633</strain>
    </source>
</reference>
<comment type="function">
    <text evidence="1">RNA chaperone with significant RNA binding, RNA strand exchange and RNA duplexing activities. May regulate ProP activity through an RNA-based, post-transcriptional mechanism.</text>
</comment>
<comment type="subcellular location">
    <subcellularLocation>
        <location evidence="1">Cytoplasm</location>
    </subcellularLocation>
</comment>
<comment type="similarity">
    <text evidence="1">Belongs to the ProQ family.</text>
</comment>
<feature type="chain" id="PRO_1000133308" description="RNA chaperone ProQ">
    <location>
        <begin position="1"/>
        <end position="228"/>
    </location>
</feature>
<feature type="region of interest" description="Disordered" evidence="2">
    <location>
        <begin position="107"/>
        <end position="178"/>
    </location>
</feature>
<feature type="compositionally biased region" description="Basic and acidic residues" evidence="2">
    <location>
        <begin position="117"/>
        <end position="136"/>
    </location>
</feature>
<feature type="compositionally biased region" description="Basic and acidic residues" evidence="2">
    <location>
        <begin position="146"/>
        <end position="175"/>
    </location>
</feature>
<proteinExistence type="inferred from homology"/>
<sequence length="228" mass="25438">MENQPKLNSSKEVIAFLAERFPHCFSAEGEARPLKIGIFQDLVERVGGEMNLSKTQLRSALRLYTSSWRYLYGVKPGATRVDLDGNPCGELEEQHVEHARKQLEEAKARVQAQRAEQQAKKREAAAAAGEKEDAPRRERKPRPVARRKEGAERKPRADKPTTKAPRAPREEKHTPVSDISVLTVGQSLKVKAGNNAMDATVLEITKDGVRVQLNSGMSLIVRAEHLVF</sequence>
<dbReference type="EMBL" id="CP001127">
    <property type="protein sequence ID" value="ACF90119.1"/>
    <property type="molecule type" value="Genomic_DNA"/>
</dbReference>
<dbReference type="RefSeq" id="WP_000431401.1">
    <property type="nucleotide sequence ID" value="NC_011094.1"/>
</dbReference>
<dbReference type="SMR" id="B4TY14"/>
<dbReference type="KEGG" id="sew:SeSA_A1989"/>
<dbReference type="HOGENOM" id="CLU_113254_0_0_6"/>
<dbReference type="Proteomes" id="UP000001865">
    <property type="component" value="Chromosome"/>
</dbReference>
<dbReference type="GO" id="GO:0005829">
    <property type="term" value="C:cytosol"/>
    <property type="evidence" value="ECO:0007669"/>
    <property type="project" value="TreeGrafter"/>
</dbReference>
<dbReference type="GO" id="GO:0033592">
    <property type="term" value="F:RNA strand annealing activity"/>
    <property type="evidence" value="ECO:0007669"/>
    <property type="project" value="UniProtKB-UniRule"/>
</dbReference>
<dbReference type="GO" id="GO:0034057">
    <property type="term" value="F:RNA strand-exchange activity"/>
    <property type="evidence" value="ECO:0007669"/>
    <property type="project" value="UniProtKB-UniRule"/>
</dbReference>
<dbReference type="GO" id="GO:0010608">
    <property type="term" value="P:post-transcriptional regulation of gene expression"/>
    <property type="evidence" value="ECO:0007669"/>
    <property type="project" value="InterPro"/>
</dbReference>
<dbReference type="FunFam" id="1.10.1710.10:FF:000001">
    <property type="entry name" value="RNA chaperone ProQ"/>
    <property type="match status" value="1"/>
</dbReference>
<dbReference type="Gene3D" id="1.10.1710.10">
    <property type="entry name" value="ProQ/FinO domain"/>
    <property type="match status" value="1"/>
</dbReference>
<dbReference type="HAMAP" id="MF_00749">
    <property type="entry name" value="ProQ"/>
    <property type="match status" value="1"/>
</dbReference>
<dbReference type="InterPro" id="IPR023529">
    <property type="entry name" value="ProQ"/>
</dbReference>
<dbReference type="InterPro" id="IPR016103">
    <property type="entry name" value="ProQ/FinO"/>
</dbReference>
<dbReference type="InterPro" id="IPR036442">
    <property type="entry name" value="ProQ/FinO_sf"/>
</dbReference>
<dbReference type="InterPro" id="IPR035236">
    <property type="entry name" value="ProQ_C"/>
</dbReference>
<dbReference type="NCBIfam" id="NF003434">
    <property type="entry name" value="PRK04950.1"/>
    <property type="match status" value="1"/>
</dbReference>
<dbReference type="PANTHER" id="PTHR38106">
    <property type="entry name" value="RNA CHAPERONE PROQ"/>
    <property type="match status" value="1"/>
</dbReference>
<dbReference type="PANTHER" id="PTHR38106:SF1">
    <property type="entry name" value="RNA CHAPERONE PROQ"/>
    <property type="match status" value="1"/>
</dbReference>
<dbReference type="Pfam" id="PF04352">
    <property type="entry name" value="ProQ"/>
    <property type="match status" value="1"/>
</dbReference>
<dbReference type="Pfam" id="PF17516">
    <property type="entry name" value="ProQ_C"/>
    <property type="match status" value="1"/>
</dbReference>
<dbReference type="SMART" id="SM00945">
    <property type="entry name" value="ProQ"/>
    <property type="match status" value="1"/>
</dbReference>
<dbReference type="SUPFAM" id="SSF48657">
    <property type="entry name" value="FinO-like"/>
    <property type="match status" value="1"/>
</dbReference>
<evidence type="ECO:0000255" key="1">
    <source>
        <dbReference type="HAMAP-Rule" id="MF_00749"/>
    </source>
</evidence>
<evidence type="ECO:0000256" key="2">
    <source>
        <dbReference type="SAM" id="MobiDB-lite"/>
    </source>
</evidence>
<organism>
    <name type="scientific">Salmonella schwarzengrund (strain CVM19633)</name>
    <dbReference type="NCBI Taxonomy" id="439843"/>
    <lineage>
        <taxon>Bacteria</taxon>
        <taxon>Pseudomonadati</taxon>
        <taxon>Pseudomonadota</taxon>
        <taxon>Gammaproteobacteria</taxon>
        <taxon>Enterobacterales</taxon>
        <taxon>Enterobacteriaceae</taxon>
        <taxon>Salmonella</taxon>
    </lineage>
</organism>